<evidence type="ECO:0000255" key="1">
    <source>
        <dbReference type="HAMAP-Rule" id="MF_00122"/>
    </source>
</evidence>
<feature type="chain" id="PRO_0000105315" description="Glutamyl-tRNA(Gln) amidotransferase subunit C">
    <location>
        <begin position="1"/>
        <end position="96"/>
    </location>
</feature>
<organism>
    <name type="scientific">Neisseria meningitidis serogroup B (strain ATCC BAA-335 / MC58)</name>
    <dbReference type="NCBI Taxonomy" id="122586"/>
    <lineage>
        <taxon>Bacteria</taxon>
        <taxon>Pseudomonadati</taxon>
        <taxon>Pseudomonadota</taxon>
        <taxon>Betaproteobacteria</taxon>
        <taxon>Neisseriales</taxon>
        <taxon>Neisseriaceae</taxon>
        <taxon>Neisseria</taxon>
    </lineage>
</organism>
<reference key="1">
    <citation type="journal article" date="2000" name="Science">
        <title>Complete genome sequence of Neisseria meningitidis serogroup B strain MC58.</title>
        <authorList>
            <person name="Tettelin H."/>
            <person name="Saunders N.J."/>
            <person name="Heidelberg J.F."/>
            <person name="Jeffries A.C."/>
            <person name="Nelson K.E."/>
            <person name="Eisen J.A."/>
            <person name="Ketchum K.A."/>
            <person name="Hood D.W."/>
            <person name="Peden J.F."/>
            <person name="Dodson R.J."/>
            <person name="Nelson W.C."/>
            <person name="Gwinn M.L."/>
            <person name="DeBoy R.T."/>
            <person name="Peterson J.D."/>
            <person name="Hickey E.K."/>
            <person name="Haft D.H."/>
            <person name="Salzberg S.L."/>
            <person name="White O."/>
            <person name="Fleischmann R.D."/>
            <person name="Dougherty B.A."/>
            <person name="Mason T.M."/>
            <person name="Ciecko A."/>
            <person name="Parksey D.S."/>
            <person name="Blair E."/>
            <person name="Cittone H."/>
            <person name="Clark E.B."/>
            <person name="Cotton M.D."/>
            <person name="Utterback T.R."/>
            <person name="Khouri H.M."/>
            <person name="Qin H."/>
            <person name="Vamathevan J.J."/>
            <person name="Gill J."/>
            <person name="Scarlato V."/>
            <person name="Masignani V."/>
            <person name="Pizza M."/>
            <person name="Grandi G."/>
            <person name="Sun L."/>
            <person name="Smith H.O."/>
            <person name="Fraser C.M."/>
            <person name="Moxon E.R."/>
            <person name="Rappuoli R."/>
            <person name="Venter J.C."/>
        </authorList>
    </citation>
    <scope>NUCLEOTIDE SEQUENCE [LARGE SCALE GENOMIC DNA]</scope>
    <source>
        <strain>ATCC BAA-335 / MC58</strain>
    </source>
</reference>
<gene>
    <name evidence="1" type="primary">gatC</name>
    <name type="ordered locus">NMB1355</name>
</gene>
<accession>Q9JZ00</accession>
<proteinExistence type="inferred from homology"/>
<sequence length="96" mass="10958">MALTLADVDKIARLSRLHLTAEEKEKSLQELNDIFTMVEQMQTINTDGIEPMAHPHEAALRLREDEVTETDRAAEYQAGAPEVRNRLYIVPQVIEE</sequence>
<keyword id="KW-0067">ATP-binding</keyword>
<keyword id="KW-0436">Ligase</keyword>
<keyword id="KW-0547">Nucleotide-binding</keyword>
<keyword id="KW-0648">Protein biosynthesis</keyword>
<keyword id="KW-1185">Reference proteome</keyword>
<dbReference type="EC" id="6.3.5.-" evidence="1"/>
<dbReference type="EMBL" id="AE002098">
    <property type="protein sequence ID" value="AAF41729.1"/>
    <property type="molecule type" value="Genomic_DNA"/>
</dbReference>
<dbReference type="PIR" id="D81091">
    <property type="entry name" value="D81091"/>
</dbReference>
<dbReference type="RefSeq" id="NP_274373.1">
    <property type="nucleotide sequence ID" value="NC_003112.2"/>
</dbReference>
<dbReference type="RefSeq" id="WP_002219137.1">
    <property type="nucleotide sequence ID" value="NC_003112.2"/>
</dbReference>
<dbReference type="SMR" id="Q9JZ00"/>
<dbReference type="STRING" id="122586.NMB1355"/>
<dbReference type="PaxDb" id="122586-NMB1355"/>
<dbReference type="KEGG" id="nme:NMB1355"/>
<dbReference type="PATRIC" id="fig|122586.8.peg.1695"/>
<dbReference type="HOGENOM" id="CLU_105899_2_2_4"/>
<dbReference type="InParanoid" id="Q9JZ00"/>
<dbReference type="OrthoDB" id="9794326at2"/>
<dbReference type="Proteomes" id="UP000000425">
    <property type="component" value="Chromosome"/>
</dbReference>
<dbReference type="GO" id="GO:0050566">
    <property type="term" value="F:asparaginyl-tRNA synthase (glutamine-hydrolyzing) activity"/>
    <property type="evidence" value="ECO:0007669"/>
    <property type="project" value="RHEA"/>
</dbReference>
<dbReference type="GO" id="GO:0005524">
    <property type="term" value="F:ATP binding"/>
    <property type="evidence" value="ECO:0007669"/>
    <property type="project" value="UniProtKB-KW"/>
</dbReference>
<dbReference type="GO" id="GO:0050567">
    <property type="term" value="F:glutaminyl-tRNA synthase (glutamine-hydrolyzing) activity"/>
    <property type="evidence" value="ECO:0007669"/>
    <property type="project" value="UniProtKB-UniRule"/>
</dbReference>
<dbReference type="GO" id="GO:0070681">
    <property type="term" value="P:glutaminyl-tRNAGln biosynthesis via transamidation"/>
    <property type="evidence" value="ECO:0000318"/>
    <property type="project" value="GO_Central"/>
</dbReference>
<dbReference type="GO" id="GO:0006450">
    <property type="term" value="P:regulation of translational fidelity"/>
    <property type="evidence" value="ECO:0007669"/>
    <property type="project" value="InterPro"/>
</dbReference>
<dbReference type="GO" id="GO:0006412">
    <property type="term" value="P:translation"/>
    <property type="evidence" value="ECO:0007669"/>
    <property type="project" value="UniProtKB-UniRule"/>
</dbReference>
<dbReference type="Gene3D" id="1.10.20.60">
    <property type="entry name" value="Glu-tRNAGln amidotransferase C subunit, N-terminal domain"/>
    <property type="match status" value="1"/>
</dbReference>
<dbReference type="HAMAP" id="MF_00122">
    <property type="entry name" value="GatC"/>
    <property type="match status" value="1"/>
</dbReference>
<dbReference type="InterPro" id="IPR036113">
    <property type="entry name" value="Asp/Glu-ADT_sf_sub_c"/>
</dbReference>
<dbReference type="InterPro" id="IPR003837">
    <property type="entry name" value="GatC"/>
</dbReference>
<dbReference type="NCBIfam" id="TIGR00135">
    <property type="entry name" value="gatC"/>
    <property type="match status" value="1"/>
</dbReference>
<dbReference type="PANTHER" id="PTHR15004">
    <property type="entry name" value="GLUTAMYL-TRNA(GLN) AMIDOTRANSFERASE SUBUNIT C, MITOCHONDRIAL"/>
    <property type="match status" value="1"/>
</dbReference>
<dbReference type="PANTHER" id="PTHR15004:SF0">
    <property type="entry name" value="GLUTAMYL-TRNA(GLN) AMIDOTRANSFERASE SUBUNIT C, MITOCHONDRIAL"/>
    <property type="match status" value="1"/>
</dbReference>
<dbReference type="Pfam" id="PF02686">
    <property type="entry name" value="GatC"/>
    <property type="match status" value="1"/>
</dbReference>
<dbReference type="SUPFAM" id="SSF141000">
    <property type="entry name" value="Glu-tRNAGln amidotransferase C subunit"/>
    <property type="match status" value="1"/>
</dbReference>
<name>GATC_NEIMB</name>
<protein>
    <recommendedName>
        <fullName>Glutamyl-tRNA(Gln) amidotransferase subunit C</fullName>
        <shortName>Glu-ADT subunit C</shortName>
        <ecNumber evidence="1">6.3.5.-</ecNumber>
    </recommendedName>
</protein>
<comment type="function">
    <text evidence="1">Allows the formation of correctly charged Asn-tRNA(Asn) or Gln-tRNA(Gln) through the transamidation of misacylated Asp-tRNA(Asn) or Glu-tRNA(Gln) in organisms which lack either or both of asparaginyl-tRNA or glutaminyl-tRNA synthetases. The reaction takes place in the presence of glutamine and ATP through an activated phospho-Asp-tRNA(Asn) or phospho-Glu-tRNA(Gln).</text>
</comment>
<comment type="catalytic activity">
    <reaction evidence="1">
        <text>L-glutamyl-tRNA(Gln) + L-glutamine + ATP + H2O = L-glutaminyl-tRNA(Gln) + L-glutamate + ADP + phosphate + H(+)</text>
        <dbReference type="Rhea" id="RHEA:17521"/>
        <dbReference type="Rhea" id="RHEA-COMP:9681"/>
        <dbReference type="Rhea" id="RHEA-COMP:9684"/>
        <dbReference type="ChEBI" id="CHEBI:15377"/>
        <dbReference type="ChEBI" id="CHEBI:15378"/>
        <dbReference type="ChEBI" id="CHEBI:29985"/>
        <dbReference type="ChEBI" id="CHEBI:30616"/>
        <dbReference type="ChEBI" id="CHEBI:43474"/>
        <dbReference type="ChEBI" id="CHEBI:58359"/>
        <dbReference type="ChEBI" id="CHEBI:78520"/>
        <dbReference type="ChEBI" id="CHEBI:78521"/>
        <dbReference type="ChEBI" id="CHEBI:456216"/>
    </reaction>
</comment>
<comment type="catalytic activity">
    <reaction evidence="1">
        <text>L-aspartyl-tRNA(Asn) + L-glutamine + ATP + H2O = L-asparaginyl-tRNA(Asn) + L-glutamate + ADP + phosphate + 2 H(+)</text>
        <dbReference type="Rhea" id="RHEA:14513"/>
        <dbReference type="Rhea" id="RHEA-COMP:9674"/>
        <dbReference type="Rhea" id="RHEA-COMP:9677"/>
        <dbReference type="ChEBI" id="CHEBI:15377"/>
        <dbReference type="ChEBI" id="CHEBI:15378"/>
        <dbReference type="ChEBI" id="CHEBI:29985"/>
        <dbReference type="ChEBI" id="CHEBI:30616"/>
        <dbReference type="ChEBI" id="CHEBI:43474"/>
        <dbReference type="ChEBI" id="CHEBI:58359"/>
        <dbReference type="ChEBI" id="CHEBI:78515"/>
        <dbReference type="ChEBI" id="CHEBI:78516"/>
        <dbReference type="ChEBI" id="CHEBI:456216"/>
    </reaction>
</comment>
<comment type="subunit">
    <text evidence="1">Heterotrimer of A, B and C subunits.</text>
</comment>
<comment type="similarity">
    <text evidence="1">Belongs to the GatC family.</text>
</comment>